<dbReference type="EMBL" id="L22858">
    <property type="protein sequence ID" value="AAA66693.1"/>
    <property type="molecule type" value="Genomic_DNA"/>
</dbReference>
<dbReference type="PIR" id="H72857">
    <property type="entry name" value="H72857"/>
</dbReference>
<dbReference type="RefSeq" id="NP_054093.1">
    <property type="nucleotide sequence ID" value="NC_001623.1"/>
</dbReference>
<dbReference type="GeneID" id="1403896"/>
<dbReference type="KEGG" id="vg:1403896"/>
<dbReference type="OrthoDB" id="14626at10239"/>
<dbReference type="Proteomes" id="UP000008292">
    <property type="component" value="Segment"/>
</dbReference>
<dbReference type="InterPro" id="IPR020221">
    <property type="entry name" value="DUF5505"/>
</dbReference>
<dbReference type="Pfam" id="PF17610">
    <property type="entry name" value="DUF5505"/>
    <property type="match status" value="1"/>
</dbReference>
<proteinExistence type="predicted"/>
<protein>
    <recommendedName>
        <fullName>Uncharacterized 18.5 kDa protein in FP-SLP intergenic region</fullName>
    </recommendedName>
</protein>
<sequence length="155" mass="18476">MYDKFMIYLHLNGLHGEAKYYKYLMSQMDFENQVADEIKRFCETRLKPAISCNTLTAESLNTLVDSVVCKNGLLNPYAKEVQFALQYLFDDDEISKRDQDGFKLFLLHNYDRCENMEEYFLINNFSIADYEFEDMFEIVRIDCRDLLLLLAKYNM</sequence>
<organism>
    <name type="scientific">Autographa californica nuclear polyhedrosis virus</name>
    <name type="common">AcMNPV</name>
    <dbReference type="NCBI Taxonomy" id="46015"/>
    <lineage>
        <taxon>Viruses</taxon>
        <taxon>Viruses incertae sedis</taxon>
        <taxon>Naldaviricetes</taxon>
        <taxon>Lefavirales</taxon>
        <taxon>Baculoviridae</taxon>
        <taxon>Alphabaculovirus</taxon>
        <taxon>Alphabaculovirus aucalifornicae</taxon>
    </lineage>
</organism>
<accession>P41466</accession>
<name>Y063_NPVAC</name>
<keyword id="KW-1185">Reference proteome</keyword>
<feature type="chain" id="PRO_0000133002" description="Uncharacterized 18.5 kDa protein in FP-SLP intergenic region">
    <location>
        <begin position="1"/>
        <end position="155"/>
    </location>
</feature>
<reference key="1">
    <citation type="journal article" date="1994" name="Virology">
        <title>The complete DNA sequence of Autographa californica nuclear polyhedrosis virus.</title>
        <authorList>
            <person name="Ayres M.D."/>
            <person name="Howard S.C."/>
            <person name="Kuzio J."/>
            <person name="Lopez-Ferber M."/>
            <person name="Possee R.D."/>
        </authorList>
    </citation>
    <scope>NUCLEOTIDE SEQUENCE [LARGE SCALE GENOMIC DNA]</scope>
    <source>
        <strain>C6</strain>
    </source>
</reference>
<organismHost>
    <name type="scientific">Lepidoptera</name>
    <name type="common">butterflies and moths</name>
    <dbReference type="NCBI Taxonomy" id="7088"/>
</organismHost>